<reference key="1">
    <citation type="journal article" date="2010" name="J. Proteome Res.">
        <title>Molecular diversification of peptide toxins from the tarantula Haplopelma hainanum (Ornithoctonus hainana) venom based on transcriptomic, peptidomic, and genomic analyses.</title>
        <authorList>
            <person name="Tang X."/>
            <person name="Zhang Y."/>
            <person name="Hu W."/>
            <person name="Xu D."/>
            <person name="Tao H."/>
            <person name="Yang X."/>
            <person name="Li Y."/>
            <person name="Jiang L."/>
            <person name="Liang S."/>
        </authorList>
    </citation>
    <scope>NUCLEOTIDE SEQUENCE [LARGE SCALE GENOMIC DNA]</scope>
    <source>
        <tissue>Venom gland</tissue>
    </source>
</reference>
<feature type="signal peptide" evidence="2">
    <location>
        <begin position="1"/>
        <end position="22"/>
    </location>
</feature>
<feature type="propeptide" id="PRO_0000400811" evidence="1">
    <location>
        <begin position="23"/>
        <end position="47"/>
    </location>
</feature>
<feature type="peptide" id="PRO_0000400812" description="U4-theraphotoxin-Hhn1n">
    <location>
        <begin position="48"/>
        <end position="84"/>
    </location>
</feature>
<feature type="disulfide bond" evidence="1">
    <location>
        <begin position="51"/>
        <end position="65"/>
    </location>
</feature>
<feature type="disulfide bond" evidence="1">
    <location>
        <begin position="55"/>
        <end position="76"/>
    </location>
</feature>
<feature type="disulfide bond" evidence="1">
    <location>
        <begin position="70"/>
        <end position="81"/>
    </location>
</feature>
<accession>D2Y2J5</accession>
<dbReference type="EMBL" id="GU293072">
    <property type="protein sequence ID" value="ADB56888.1"/>
    <property type="molecule type" value="Genomic_DNA"/>
</dbReference>
<dbReference type="ArachnoServer" id="AS001836">
    <property type="toxin name" value="U4-theraphotoxin-Hhn1n"/>
</dbReference>
<dbReference type="GO" id="GO:0005576">
    <property type="term" value="C:extracellular region"/>
    <property type="evidence" value="ECO:0007669"/>
    <property type="project" value="UniProtKB-SubCell"/>
</dbReference>
<dbReference type="GO" id="GO:0035792">
    <property type="term" value="C:host cell postsynaptic membrane"/>
    <property type="evidence" value="ECO:0007669"/>
    <property type="project" value="UniProtKB-KW"/>
</dbReference>
<dbReference type="GO" id="GO:0090729">
    <property type="term" value="F:toxin activity"/>
    <property type="evidence" value="ECO:0007669"/>
    <property type="project" value="UniProtKB-KW"/>
</dbReference>
<dbReference type="InterPro" id="IPR012625">
    <property type="entry name" value="Hwtx-2-like"/>
</dbReference>
<dbReference type="Pfam" id="PF08089">
    <property type="entry name" value="Toxin_20"/>
    <property type="match status" value="1"/>
</dbReference>
<dbReference type="SUPFAM" id="SSF57059">
    <property type="entry name" value="omega toxin-like"/>
    <property type="match status" value="1"/>
</dbReference>
<dbReference type="PROSITE" id="PS60022">
    <property type="entry name" value="HWTX_2"/>
    <property type="match status" value="1"/>
</dbReference>
<protein>
    <recommendedName>
        <fullName>U4-theraphotoxin-Hhn1n</fullName>
        <shortName>U4-TRTX-Hhn1n</shortName>
    </recommendedName>
    <alternativeName>
        <fullName>Hainantoxin-II-22</fullName>
        <shortName>HNTX-II-22</shortName>
    </alternativeName>
</protein>
<evidence type="ECO:0000250" key="1"/>
<evidence type="ECO:0000255" key="2"/>
<evidence type="ECO:0000305" key="3"/>
<proteinExistence type="inferred from homology"/>
<name>H2V01_CYRHA</name>
<organism>
    <name type="scientific">Cyriopagopus hainanus</name>
    <name type="common">Chinese bird spider</name>
    <name type="synonym">Haplopelma hainanum</name>
    <dbReference type="NCBI Taxonomy" id="209901"/>
    <lineage>
        <taxon>Eukaryota</taxon>
        <taxon>Metazoa</taxon>
        <taxon>Ecdysozoa</taxon>
        <taxon>Arthropoda</taxon>
        <taxon>Chelicerata</taxon>
        <taxon>Arachnida</taxon>
        <taxon>Araneae</taxon>
        <taxon>Mygalomorphae</taxon>
        <taxon>Theraphosidae</taxon>
        <taxon>Haplopelma</taxon>
    </lineage>
</organism>
<sequence length="84" mass="9337">MKVTLIAILTCAAVLVLHTTAAEELEESQLMEVGMPDTELAAVDEERLFECPVSCEIEKEGNKDCKKKKCKGGWKCKFNMCVKV</sequence>
<comment type="function">
    <text evidence="1">Postsynaptic neurotoxin.</text>
</comment>
<comment type="subcellular location">
    <subcellularLocation>
        <location evidence="1">Secreted</location>
    </subcellularLocation>
</comment>
<comment type="tissue specificity">
    <text>Expressed by the venom gland.</text>
</comment>
<comment type="similarity">
    <text evidence="3">Belongs to the neurotoxin 12 (Hwtx-2) family. 02 (Hwtx-2) subfamily.</text>
</comment>
<keyword id="KW-1015">Disulfide bond</keyword>
<keyword id="KW-0528">Neurotoxin</keyword>
<keyword id="KW-0629">Postsynaptic neurotoxin</keyword>
<keyword id="KW-0964">Secreted</keyword>
<keyword id="KW-0732">Signal</keyword>
<keyword id="KW-0800">Toxin</keyword>